<evidence type="ECO:0000255" key="1">
    <source>
        <dbReference type="HAMAP-Rule" id="MF_01569"/>
    </source>
</evidence>
<accession>C1CB39</accession>
<dbReference type="EC" id="6.1.1.15" evidence="1"/>
<dbReference type="EMBL" id="CP000918">
    <property type="protein sequence ID" value="ACO17695.1"/>
    <property type="molecule type" value="Genomic_DNA"/>
</dbReference>
<dbReference type="RefSeq" id="WP_000814062.1">
    <property type="nucleotide sequence ID" value="NC_012468.1"/>
</dbReference>
<dbReference type="SMR" id="C1CB39"/>
<dbReference type="KEGG" id="snm:SP70585_0324"/>
<dbReference type="HOGENOM" id="CLU_016739_0_0_9"/>
<dbReference type="Proteomes" id="UP000002211">
    <property type="component" value="Chromosome"/>
</dbReference>
<dbReference type="GO" id="GO:0005829">
    <property type="term" value="C:cytosol"/>
    <property type="evidence" value="ECO:0007669"/>
    <property type="project" value="TreeGrafter"/>
</dbReference>
<dbReference type="GO" id="GO:0002161">
    <property type="term" value="F:aminoacyl-tRNA deacylase activity"/>
    <property type="evidence" value="ECO:0007669"/>
    <property type="project" value="InterPro"/>
</dbReference>
<dbReference type="GO" id="GO:0005524">
    <property type="term" value="F:ATP binding"/>
    <property type="evidence" value="ECO:0007669"/>
    <property type="project" value="UniProtKB-UniRule"/>
</dbReference>
<dbReference type="GO" id="GO:0140096">
    <property type="term" value="F:catalytic activity, acting on a protein"/>
    <property type="evidence" value="ECO:0007669"/>
    <property type="project" value="UniProtKB-ARBA"/>
</dbReference>
<dbReference type="GO" id="GO:0004827">
    <property type="term" value="F:proline-tRNA ligase activity"/>
    <property type="evidence" value="ECO:0007669"/>
    <property type="project" value="UniProtKB-UniRule"/>
</dbReference>
<dbReference type="GO" id="GO:0016740">
    <property type="term" value="F:transferase activity"/>
    <property type="evidence" value="ECO:0007669"/>
    <property type="project" value="UniProtKB-ARBA"/>
</dbReference>
<dbReference type="GO" id="GO:0006433">
    <property type="term" value="P:prolyl-tRNA aminoacylation"/>
    <property type="evidence" value="ECO:0007669"/>
    <property type="project" value="UniProtKB-UniRule"/>
</dbReference>
<dbReference type="CDD" id="cd04334">
    <property type="entry name" value="ProRS-INS"/>
    <property type="match status" value="1"/>
</dbReference>
<dbReference type="CDD" id="cd00861">
    <property type="entry name" value="ProRS_anticodon_short"/>
    <property type="match status" value="1"/>
</dbReference>
<dbReference type="CDD" id="cd00779">
    <property type="entry name" value="ProRS_core_prok"/>
    <property type="match status" value="1"/>
</dbReference>
<dbReference type="FunFam" id="3.30.930.10:FF:000062">
    <property type="entry name" value="Proline--tRNA ligase"/>
    <property type="match status" value="1"/>
</dbReference>
<dbReference type="FunFam" id="3.30.930.10:FF:000070">
    <property type="entry name" value="Proline--tRNA ligase"/>
    <property type="match status" value="1"/>
</dbReference>
<dbReference type="FunFam" id="3.40.50.800:FF:000011">
    <property type="entry name" value="Proline--tRNA ligase"/>
    <property type="match status" value="1"/>
</dbReference>
<dbReference type="FunFam" id="3.90.960.10:FF:000004">
    <property type="entry name" value="Proline--tRNA ligase"/>
    <property type="match status" value="1"/>
</dbReference>
<dbReference type="Gene3D" id="3.40.50.800">
    <property type="entry name" value="Anticodon-binding domain"/>
    <property type="match status" value="1"/>
</dbReference>
<dbReference type="Gene3D" id="3.30.930.10">
    <property type="entry name" value="Bira Bifunctional Protein, Domain 2"/>
    <property type="match status" value="2"/>
</dbReference>
<dbReference type="Gene3D" id="3.90.960.10">
    <property type="entry name" value="YbaK/aminoacyl-tRNA synthetase-associated domain"/>
    <property type="match status" value="1"/>
</dbReference>
<dbReference type="HAMAP" id="MF_01569">
    <property type="entry name" value="Pro_tRNA_synth_type1"/>
    <property type="match status" value="1"/>
</dbReference>
<dbReference type="InterPro" id="IPR002314">
    <property type="entry name" value="aa-tRNA-synt_IIb"/>
</dbReference>
<dbReference type="InterPro" id="IPR006195">
    <property type="entry name" value="aa-tRNA-synth_II"/>
</dbReference>
<dbReference type="InterPro" id="IPR045864">
    <property type="entry name" value="aa-tRNA-synth_II/BPL/LPL"/>
</dbReference>
<dbReference type="InterPro" id="IPR004154">
    <property type="entry name" value="Anticodon-bd"/>
</dbReference>
<dbReference type="InterPro" id="IPR036621">
    <property type="entry name" value="Anticodon-bd_dom_sf"/>
</dbReference>
<dbReference type="InterPro" id="IPR002316">
    <property type="entry name" value="Pro-tRNA-ligase_IIa"/>
</dbReference>
<dbReference type="InterPro" id="IPR004500">
    <property type="entry name" value="Pro-tRNA-synth_IIa_bac-type"/>
</dbReference>
<dbReference type="InterPro" id="IPR023717">
    <property type="entry name" value="Pro-tRNA-Synthase_IIa_type1"/>
</dbReference>
<dbReference type="InterPro" id="IPR050062">
    <property type="entry name" value="Pro-tRNA_synthetase"/>
</dbReference>
<dbReference type="InterPro" id="IPR044140">
    <property type="entry name" value="ProRS_anticodon_short"/>
</dbReference>
<dbReference type="InterPro" id="IPR033730">
    <property type="entry name" value="ProRS_core_prok"/>
</dbReference>
<dbReference type="InterPro" id="IPR036754">
    <property type="entry name" value="YbaK/aa-tRNA-synt-asso_dom_sf"/>
</dbReference>
<dbReference type="InterPro" id="IPR007214">
    <property type="entry name" value="YbaK/aa-tRNA-synth-assoc-dom"/>
</dbReference>
<dbReference type="NCBIfam" id="NF006625">
    <property type="entry name" value="PRK09194.1"/>
    <property type="match status" value="1"/>
</dbReference>
<dbReference type="NCBIfam" id="TIGR00409">
    <property type="entry name" value="proS_fam_II"/>
    <property type="match status" value="2"/>
</dbReference>
<dbReference type="PANTHER" id="PTHR42753">
    <property type="entry name" value="MITOCHONDRIAL RIBOSOME PROTEIN L39/PROLYL-TRNA LIGASE FAMILY MEMBER"/>
    <property type="match status" value="1"/>
</dbReference>
<dbReference type="PANTHER" id="PTHR42753:SF2">
    <property type="entry name" value="PROLINE--TRNA LIGASE"/>
    <property type="match status" value="1"/>
</dbReference>
<dbReference type="Pfam" id="PF03129">
    <property type="entry name" value="HGTP_anticodon"/>
    <property type="match status" value="1"/>
</dbReference>
<dbReference type="Pfam" id="PF00587">
    <property type="entry name" value="tRNA-synt_2b"/>
    <property type="match status" value="1"/>
</dbReference>
<dbReference type="Pfam" id="PF04073">
    <property type="entry name" value="tRNA_edit"/>
    <property type="match status" value="1"/>
</dbReference>
<dbReference type="PRINTS" id="PR01046">
    <property type="entry name" value="TRNASYNTHPRO"/>
</dbReference>
<dbReference type="SUPFAM" id="SSF52954">
    <property type="entry name" value="Class II aaRS ABD-related"/>
    <property type="match status" value="1"/>
</dbReference>
<dbReference type="SUPFAM" id="SSF55681">
    <property type="entry name" value="Class II aaRS and biotin synthetases"/>
    <property type="match status" value="1"/>
</dbReference>
<dbReference type="SUPFAM" id="SSF55826">
    <property type="entry name" value="YbaK/ProRS associated domain"/>
    <property type="match status" value="1"/>
</dbReference>
<dbReference type="PROSITE" id="PS50862">
    <property type="entry name" value="AA_TRNA_LIGASE_II"/>
    <property type="match status" value="1"/>
</dbReference>
<comment type="function">
    <text evidence="1">Catalyzes the attachment of proline to tRNA(Pro) in a two-step reaction: proline is first activated by ATP to form Pro-AMP and then transferred to the acceptor end of tRNA(Pro). As ProRS can inadvertently accommodate and process non-cognate amino acids such as alanine and cysteine, to avoid such errors it has two additional distinct editing activities against alanine. One activity is designated as 'pretransfer' editing and involves the tRNA(Pro)-independent hydrolysis of activated Ala-AMP. The other activity is designated 'posttransfer' editing and involves deacylation of mischarged Ala-tRNA(Pro). The misacylated Cys-tRNA(Pro) is not edited by ProRS.</text>
</comment>
<comment type="catalytic activity">
    <reaction evidence="1">
        <text>tRNA(Pro) + L-proline + ATP = L-prolyl-tRNA(Pro) + AMP + diphosphate</text>
        <dbReference type="Rhea" id="RHEA:14305"/>
        <dbReference type="Rhea" id="RHEA-COMP:9700"/>
        <dbReference type="Rhea" id="RHEA-COMP:9702"/>
        <dbReference type="ChEBI" id="CHEBI:30616"/>
        <dbReference type="ChEBI" id="CHEBI:33019"/>
        <dbReference type="ChEBI" id="CHEBI:60039"/>
        <dbReference type="ChEBI" id="CHEBI:78442"/>
        <dbReference type="ChEBI" id="CHEBI:78532"/>
        <dbReference type="ChEBI" id="CHEBI:456215"/>
        <dbReference type="EC" id="6.1.1.15"/>
    </reaction>
</comment>
<comment type="subunit">
    <text evidence="1">Homodimer.</text>
</comment>
<comment type="subcellular location">
    <subcellularLocation>
        <location evidence="1">Cytoplasm</location>
    </subcellularLocation>
</comment>
<comment type="domain">
    <text evidence="1">Consists of three domains: the N-terminal catalytic domain, the editing domain and the C-terminal anticodon-binding domain.</text>
</comment>
<comment type="similarity">
    <text evidence="1">Belongs to the class-II aminoacyl-tRNA synthetase family. ProS type 1 subfamily.</text>
</comment>
<proteinExistence type="inferred from homology"/>
<sequence>MKQSKMPIPTLREMPSDAQVISHALMLRAGYVRQVSAGVYSYLPLANRVIEKAKNIMRQEFEKIGAVEMLAPALLSAELWRESGRYETYGEDLYKLKNREKSDFILGPTHEETFTAIVRDSVKSYKQLPLNLYQIQPKYRDEKRPRNGLLRTREFIMKDAYSFHANYDSLDSVYDEYKAAYERIFTRSGLDFKAIIGDGGAMGGKDSQEFMAITSARTDLDRWVVLDKSVASFDEIPAEVQEEIKAELLKWIVSGEDTIAYSSESSYAANLEMATNEYKPSNRVIAEEEVIRVATPDVKSIDEVAAFLNVPEEQTIKTLFYIADGELVAALLVGNDQLNEVKLKNHLGADFFDVASEEEVANVVQAGFGSLGPVGLPENIKIIADRKVQDVRNAVVGANEDGYHLTGVNPGRDFTAEYVDIREVREGEISPDGQGVLNFARGIEIGHIFKLGTRYSASMGADVLDENGRAVPIIMGCYGIGVSRLLSAVMEQHARLFVNKTPKGEYRYAWGINFPKELAPFDVHLITVNVKDEEAQALTEKLEASLMGAGYEVLTDDRNERVGVKFSDSDLIGLPIRITVGKKAADGIVEVKIKATGDTIEVHADNVLETLEILSKK</sequence>
<protein>
    <recommendedName>
        <fullName evidence="1">Proline--tRNA ligase</fullName>
        <ecNumber evidence="1">6.1.1.15</ecNumber>
    </recommendedName>
    <alternativeName>
        <fullName evidence="1">Prolyl-tRNA synthetase</fullName>
        <shortName evidence="1">ProRS</shortName>
    </alternativeName>
</protein>
<reference key="1">
    <citation type="journal article" date="2010" name="Genome Biol.">
        <title>Structure and dynamics of the pan-genome of Streptococcus pneumoniae and closely related species.</title>
        <authorList>
            <person name="Donati C."/>
            <person name="Hiller N.L."/>
            <person name="Tettelin H."/>
            <person name="Muzzi A."/>
            <person name="Croucher N.J."/>
            <person name="Angiuoli S.V."/>
            <person name="Oggioni M."/>
            <person name="Dunning Hotopp J.C."/>
            <person name="Hu F.Z."/>
            <person name="Riley D.R."/>
            <person name="Covacci A."/>
            <person name="Mitchell T.J."/>
            <person name="Bentley S.D."/>
            <person name="Kilian M."/>
            <person name="Ehrlich G.D."/>
            <person name="Rappuoli R."/>
            <person name="Moxon E.R."/>
            <person name="Masignani V."/>
        </authorList>
    </citation>
    <scope>NUCLEOTIDE SEQUENCE [LARGE SCALE GENOMIC DNA]</scope>
    <source>
        <strain>70585</strain>
    </source>
</reference>
<name>SYP_STRP7</name>
<feature type="chain" id="PRO_1000185513" description="Proline--tRNA ligase">
    <location>
        <begin position="1"/>
        <end position="617"/>
    </location>
</feature>
<organism>
    <name type="scientific">Streptococcus pneumoniae (strain 70585)</name>
    <dbReference type="NCBI Taxonomy" id="488221"/>
    <lineage>
        <taxon>Bacteria</taxon>
        <taxon>Bacillati</taxon>
        <taxon>Bacillota</taxon>
        <taxon>Bacilli</taxon>
        <taxon>Lactobacillales</taxon>
        <taxon>Streptococcaceae</taxon>
        <taxon>Streptococcus</taxon>
    </lineage>
</organism>
<keyword id="KW-0030">Aminoacyl-tRNA synthetase</keyword>
<keyword id="KW-0067">ATP-binding</keyword>
<keyword id="KW-0963">Cytoplasm</keyword>
<keyword id="KW-0436">Ligase</keyword>
<keyword id="KW-0547">Nucleotide-binding</keyword>
<keyword id="KW-0648">Protein biosynthesis</keyword>
<gene>
    <name evidence="1" type="primary">proS</name>
    <name type="ordered locus">SP70585_0324</name>
</gene>